<name>CO145_CAEEL</name>
<reference key="1">
    <citation type="journal article" date="1998" name="Science">
        <title>Genome sequence of the nematode C. elegans: a platform for investigating biology.</title>
        <authorList>
            <consortium name="The C. elegans sequencing consortium"/>
        </authorList>
    </citation>
    <scope>NUCLEOTIDE SEQUENCE [LARGE SCALE GENOMIC DNA]</scope>
    <source>
        <strain>Bristol N2</strain>
    </source>
</reference>
<accession>Q17459</accession>
<evidence type="ECO:0000250" key="1"/>
<evidence type="ECO:0000255" key="2"/>
<evidence type="ECO:0000256" key="3">
    <source>
        <dbReference type="SAM" id="MobiDB-lite"/>
    </source>
</evidence>
<evidence type="ECO:0000305" key="4"/>
<organism>
    <name type="scientific">Caenorhabditis elegans</name>
    <dbReference type="NCBI Taxonomy" id="6239"/>
    <lineage>
        <taxon>Eukaryota</taxon>
        <taxon>Metazoa</taxon>
        <taxon>Ecdysozoa</taxon>
        <taxon>Nematoda</taxon>
        <taxon>Chromadorea</taxon>
        <taxon>Rhabditida</taxon>
        <taxon>Rhabditina</taxon>
        <taxon>Rhabditomorpha</taxon>
        <taxon>Rhabditoidea</taxon>
        <taxon>Rhabditidae</taxon>
        <taxon>Peloderinae</taxon>
        <taxon>Caenorhabditis</taxon>
    </lineage>
</organism>
<gene>
    <name type="primary">col-145</name>
    <name type="ORF">B0222.7</name>
</gene>
<comment type="function">
    <text evidence="1">Nematode cuticles are composed largely of collagen-like proteins. The cuticle functions both as an exoskeleton and as a barrier to protect the worm from its environment (By similarity).</text>
</comment>
<comment type="subunit">
    <text evidence="1">Collagen polypeptide chains are complexed within the cuticle by disulfide bonds and other types of covalent cross-links.</text>
</comment>
<comment type="similarity">
    <text evidence="4">Belongs to the cuticular collagen family.</text>
</comment>
<feature type="signal peptide" evidence="2">
    <location>
        <begin position="1"/>
        <end position="30"/>
    </location>
</feature>
<feature type="chain" id="PRO_0000307867" description="Putative cuticle collagen 145">
    <location>
        <begin position="31"/>
        <end position="294"/>
    </location>
</feature>
<feature type="domain" description="Collagen-like" evidence="2">
    <location>
        <begin position="218"/>
        <end position="276"/>
    </location>
</feature>
<feature type="region of interest" description="Disordered" evidence="3">
    <location>
        <begin position="100"/>
        <end position="133"/>
    </location>
</feature>
<feature type="region of interest" description="Triple-helical region">
    <location>
        <begin position="102"/>
        <end position="127"/>
    </location>
</feature>
<feature type="region of interest" description="Triple-helical region">
    <location>
        <begin position="148"/>
        <end position="277"/>
    </location>
</feature>
<feature type="region of interest" description="Disordered" evidence="3">
    <location>
        <begin position="148"/>
        <end position="276"/>
    </location>
</feature>
<feature type="compositionally biased region" description="Pro residues" evidence="3">
    <location>
        <begin position="100"/>
        <end position="112"/>
    </location>
</feature>
<feature type="compositionally biased region" description="Low complexity" evidence="3">
    <location>
        <begin position="164"/>
        <end position="194"/>
    </location>
</feature>
<feature type="compositionally biased region" description="Low complexity" evidence="3">
    <location>
        <begin position="219"/>
        <end position="265"/>
    </location>
</feature>
<sequence>MEKILVTFSTGAASIAVLAVLFTVPSLYNTINEVHDQVLDGVSVFRVETDSAWTEMMDIQITVTPPTKPRVNPFNSVFRQKRQTFSGLPAWCQCEPTKPTCPPGPPGPPGQPGAPGTPGAPGPKGDDNTATFAPLTCAPVSQDCVKCPQGPAGPAGPSGPAGPAGPDGQPGFPGQRGNDGFPGAPGAPGDNGQPGTPGQDGFPGQPGADGQRGSGAPGAPGAPGNAGPAGPAGQDGFPGQDGAPGPAGPAGQDGFPGNAGSDGQPGAPGGPGLPGNDAAYCACPPRSAVFLSRH</sequence>
<dbReference type="EMBL" id="FO080127">
    <property type="protein sequence ID" value="CCD61420.2"/>
    <property type="molecule type" value="Genomic_DNA"/>
</dbReference>
<dbReference type="PIR" id="T29838">
    <property type="entry name" value="T29838"/>
</dbReference>
<dbReference type="RefSeq" id="NP_505375.2">
    <property type="nucleotide sequence ID" value="NM_072974.8"/>
</dbReference>
<dbReference type="SMR" id="Q17459"/>
<dbReference type="BioGRID" id="44335">
    <property type="interactions" value="1"/>
</dbReference>
<dbReference type="DIP" id="DIP-24575N"/>
<dbReference type="FunCoup" id="Q17459">
    <property type="interactions" value="57"/>
</dbReference>
<dbReference type="STRING" id="6239.B0222.7.1"/>
<dbReference type="PaxDb" id="6239-B0222.7"/>
<dbReference type="PeptideAtlas" id="Q17459"/>
<dbReference type="EnsemblMetazoa" id="B0222.7.1">
    <property type="protein sequence ID" value="B0222.7.1"/>
    <property type="gene ID" value="WBGene00000718"/>
</dbReference>
<dbReference type="GeneID" id="179297"/>
<dbReference type="KEGG" id="cel:CELE_B0222.7"/>
<dbReference type="UCSC" id="B0222.7">
    <property type="organism name" value="c. elegans"/>
</dbReference>
<dbReference type="AGR" id="WB:WBGene00000718"/>
<dbReference type="CTD" id="179297"/>
<dbReference type="WormBase" id="B0222.7">
    <property type="protein sequence ID" value="CE48016"/>
    <property type="gene ID" value="WBGene00000718"/>
    <property type="gene designation" value="col-145"/>
</dbReference>
<dbReference type="eggNOG" id="KOG3544">
    <property type="taxonomic scope" value="Eukaryota"/>
</dbReference>
<dbReference type="GeneTree" id="ENSGT00970000195960"/>
<dbReference type="HOGENOM" id="CLU_001074_4_3_1"/>
<dbReference type="InParanoid" id="Q17459"/>
<dbReference type="OMA" id="TFAIMAC"/>
<dbReference type="OrthoDB" id="5875171at2759"/>
<dbReference type="PhylomeDB" id="Q17459"/>
<dbReference type="PRO" id="PR:Q17459"/>
<dbReference type="Proteomes" id="UP000001940">
    <property type="component" value="Chromosome V"/>
</dbReference>
<dbReference type="Bgee" id="WBGene00000718">
    <property type="expression patterns" value="Expressed in material anatomical entity and 3 other cell types or tissues"/>
</dbReference>
<dbReference type="GO" id="GO:0005581">
    <property type="term" value="C:collagen trimer"/>
    <property type="evidence" value="ECO:0007669"/>
    <property type="project" value="UniProtKB-KW"/>
</dbReference>
<dbReference type="GO" id="GO:0042302">
    <property type="term" value="F:structural constituent of cuticle"/>
    <property type="evidence" value="ECO:0007669"/>
    <property type="project" value="UniProtKB-KW"/>
</dbReference>
<dbReference type="Gene3D" id="1.20.5.320">
    <property type="entry name" value="6-Phosphogluconate Dehydrogenase, domain 3"/>
    <property type="match status" value="1"/>
</dbReference>
<dbReference type="InterPro" id="IPR002486">
    <property type="entry name" value="Col_cuticle_N"/>
</dbReference>
<dbReference type="InterPro" id="IPR008160">
    <property type="entry name" value="Collagen"/>
</dbReference>
<dbReference type="PANTHER" id="PTHR24637">
    <property type="entry name" value="COLLAGEN"/>
    <property type="match status" value="1"/>
</dbReference>
<dbReference type="PANTHER" id="PTHR24637:SF305">
    <property type="entry name" value="NEMATODE CUTICLE COLLAGEN N-TERMINAL DOMAIN-CONTAINING PROTEIN-RELATED"/>
    <property type="match status" value="1"/>
</dbReference>
<dbReference type="Pfam" id="PF01484">
    <property type="entry name" value="Col_cuticle_N"/>
    <property type="match status" value="1"/>
</dbReference>
<dbReference type="Pfam" id="PF01391">
    <property type="entry name" value="Collagen"/>
    <property type="match status" value="1"/>
</dbReference>
<dbReference type="SMART" id="SM01088">
    <property type="entry name" value="Col_cuticle_N"/>
    <property type="match status" value="1"/>
</dbReference>
<protein>
    <recommendedName>
        <fullName>Putative cuticle collagen 145</fullName>
    </recommendedName>
</protein>
<proteinExistence type="inferred from homology"/>
<keyword id="KW-0176">Collagen</keyword>
<keyword id="KW-0193">Cuticle</keyword>
<keyword id="KW-1015">Disulfide bond</keyword>
<keyword id="KW-1185">Reference proteome</keyword>
<keyword id="KW-0677">Repeat</keyword>
<keyword id="KW-0732">Signal</keyword>